<proteinExistence type="evidence at protein level"/>
<comment type="function">
    <text>Regulates arginine biosynthesis genes.</text>
</comment>
<comment type="pathway">
    <text>Amino-acid biosynthesis; L-arginine biosynthesis [regulation].</text>
</comment>
<comment type="subunit">
    <text>Homohexamer.</text>
</comment>
<comment type="subcellular location">
    <subcellularLocation>
        <location evidence="1">Cytoplasm</location>
    </subcellularLocation>
</comment>
<comment type="similarity">
    <text evidence="1">Belongs to the ArgR family.</text>
</comment>
<protein>
    <recommendedName>
        <fullName>Arginine repressor</fullName>
    </recommendedName>
</protein>
<reference key="1">
    <citation type="journal article" date="1997" name="Mol. Microbiol.">
        <title>The highly thermostable arginine repressor of Bacillus stearothermophilus: gene cloning and repressor-operator interactions.</title>
        <authorList>
            <person name="Dion M."/>
            <person name="Charlier D.R.M."/>
            <person name="Wang H."/>
            <person name="Gigot D."/>
            <person name="Savchenko A."/>
            <person name="Hallet J.-N."/>
            <person name="Glansdorff N."/>
            <person name="Sakanyan V."/>
        </authorList>
    </citation>
    <scope>NUCLEOTIDE SEQUENCE [GENOMIC DNA]</scope>
    <source>
        <strain>NCIMB 8224 / CCM 2186 / NCA C-1235.1 / VKM B-718</strain>
    </source>
</reference>
<reference key="2">
    <citation type="journal article" date="1999" name="Nat. Struct. Biol.">
        <title>Structure of the arginine repressor from Bacillus stearothermophilus.</title>
        <authorList>
            <person name="Ni J."/>
            <person name="Sakanyan V."/>
            <person name="Charlier D."/>
            <person name="Glansdorff N."/>
            <person name="van Duyne G.D."/>
        </authorList>
    </citation>
    <scope>X-RAY CRYSTALLOGRAPHY (2.5 ANGSTROMS)</scope>
</reference>
<evidence type="ECO:0000305" key="1"/>
<evidence type="ECO:0007829" key="2">
    <source>
        <dbReference type="PDB" id="1B4A"/>
    </source>
</evidence>
<evidence type="ECO:0007829" key="3">
    <source>
        <dbReference type="PDB" id="1B4B"/>
    </source>
</evidence>
<feature type="chain" id="PRO_0000205071" description="Arginine repressor">
    <location>
        <begin position="1"/>
        <end position="149"/>
    </location>
</feature>
<feature type="helix" evidence="2">
    <location>
        <begin position="5"/>
        <end position="16"/>
    </location>
</feature>
<feature type="helix" evidence="2">
    <location>
        <begin position="22"/>
        <end position="31"/>
    </location>
</feature>
<feature type="helix" evidence="2">
    <location>
        <begin position="38"/>
        <end position="47"/>
    </location>
</feature>
<feature type="strand" evidence="2">
    <location>
        <begin position="51"/>
        <end position="54"/>
    </location>
</feature>
<feature type="strand" evidence="2">
    <location>
        <begin position="56"/>
        <end position="58"/>
    </location>
</feature>
<feature type="strand" evidence="2">
    <location>
        <begin position="60"/>
        <end position="63"/>
    </location>
</feature>
<feature type="strand" evidence="2">
    <location>
        <begin position="68"/>
        <end position="70"/>
    </location>
</feature>
<feature type="helix" evidence="3">
    <location>
        <begin position="80"/>
        <end position="83"/>
    </location>
</feature>
<feature type="strand" evidence="3">
    <location>
        <begin position="84"/>
        <end position="90"/>
    </location>
</feature>
<feature type="strand" evidence="3">
    <location>
        <begin position="93"/>
        <end position="99"/>
    </location>
</feature>
<feature type="helix" evidence="3">
    <location>
        <begin position="103"/>
        <end position="113"/>
    </location>
</feature>
<feature type="strand" evidence="3">
    <location>
        <begin position="118"/>
        <end position="123"/>
    </location>
</feature>
<feature type="strand" evidence="3">
    <location>
        <begin position="125"/>
        <end position="134"/>
    </location>
</feature>
<feature type="helix" evidence="3">
    <location>
        <begin position="135"/>
        <end position="146"/>
    </location>
</feature>
<organism>
    <name type="scientific">Geobacillus stearothermophilus</name>
    <name type="common">Bacillus stearothermophilus</name>
    <dbReference type="NCBI Taxonomy" id="1422"/>
    <lineage>
        <taxon>Bacteria</taxon>
        <taxon>Bacillati</taxon>
        <taxon>Bacillota</taxon>
        <taxon>Bacilli</taxon>
        <taxon>Bacillales</taxon>
        <taxon>Anoxybacillaceae</taxon>
        <taxon>Geobacillus</taxon>
    </lineage>
</organism>
<accession>O31408</accession>
<gene>
    <name type="primary">argR</name>
</gene>
<dbReference type="EMBL" id="Y09546">
    <property type="protein sequence ID" value="CAA70737.1"/>
    <property type="molecule type" value="Genomic_DNA"/>
</dbReference>
<dbReference type="PDB" id="1B4A">
    <property type="method" value="X-ray"/>
    <property type="resolution" value="2.50 A"/>
    <property type="chains" value="A/B/C/D/E/F=2-149"/>
</dbReference>
<dbReference type="PDB" id="1B4B">
    <property type="method" value="X-ray"/>
    <property type="resolution" value="2.20 A"/>
    <property type="chains" value="A/B/C=79-149"/>
</dbReference>
<dbReference type="PDBsum" id="1B4A"/>
<dbReference type="PDBsum" id="1B4B"/>
<dbReference type="SMR" id="O31408"/>
<dbReference type="UniPathway" id="UPA00068"/>
<dbReference type="EvolutionaryTrace" id="O31408"/>
<dbReference type="GO" id="GO:0005737">
    <property type="term" value="C:cytoplasm"/>
    <property type="evidence" value="ECO:0007669"/>
    <property type="project" value="UniProtKB-SubCell"/>
</dbReference>
<dbReference type="GO" id="GO:0034618">
    <property type="term" value="F:arginine binding"/>
    <property type="evidence" value="ECO:0007669"/>
    <property type="project" value="InterPro"/>
</dbReference>
<dbReference type="GO" id="GO:0003677">
    <property type="term" value="F:DNA binding"/>
    <property type="evidence" value="ECO:0007669"/>
    <property type="project" value="UniProtKB-KW"/>
</dbReference>
<dbReference type="GO" id="GO:0003700">
    <property type="term" value="F:DNA-binding transcription factor activity"/>
    <property type="evidence" value="ECO:0007669"/>
    <property type="project" value="UniProtKB-UniRule"/>
</dbReference>
<dbReference type="GO" id="GO:0006526">
    <property type="term" value="P:L-arginine biosynthetic process"/>
    <property type="evidence" value="ECO:0007669"/>
    <property type="project" value="UniProtKB-UniPathway"/>
</dbReference>
<dbReference type="GO" id="GO:0051259">
    <property type="term" value="P:protein complex oligomerization"/>
    <property type="evidence" value="ECO:0007669"/>
    <property type="project" value="InterPro"/>
</dbReference>
<dbReference type="GO" id="GO:1900079">
    <property type="term" value="P:regulation of arginine biosynthetic process"/>
    <property type="evidence" value="ECO:0007669"/>
    <property type="project" value="UniProtKB-UniRule"/>
</dbReference>
<dbReference type="FunFam" id="3.30.1360.40:FF:000006">
    <property type="entry name" value="Arginine repressor"/>
    <property type="match status" value="1"/>
</dbReference>
<dbReference type="Gene3D" id="3.30.1360.40">
    <property type="match status" value="1"/>
</dbReference>
<dbReference type="Gene3D" id="1.10.10.10">
    <property type="entry name" value="Winged helix-like DNA-binding domain superfamily/Winged helix DNA-binding domain"/>
    <property type="match status" value="1"/>
</dbReference>
<dbReference type="HAMAP" id="MF_00173">
    <property type="entry name" value="Arg_repressor"/>
    <property type="match status" value="1"/>
</dbReference>
<dbReference type="InterPro" id="IPR001669">
    <property type="entry name" value="Arg_repress"/>
</dbReference>
<dbReference type="InterPro" id="IPR020899">
    <property type="entry name" value="Arg_repress_C"/>
</dbReference>
<dbReference type="InterPro" id="IPR036251">
    <property type="entry name" value="Arg_repress_C_sf"/>
</dbReference>
<dbReference type="InterPro" id="IPR020900">
    <property type="entry name" value="Arg_repress_DNA-bd"/>
</dbReference>
<dbReference type="InterPro" id="IPR036388">
    <property type="entry name" value="WH-like_DNA-bd_sf"/>
</dbReference>
<dbReference type="InterPro" id="IPR036390">
    <property type="entry name" value="WH_DNA-bd_sf"/>
</dbReference>
<dbReference type="NCBIfam" id="TIGR01529">
    <property type="entry name" value="argR_whole"/>
    <property type="match status" value="1"/>
</dbReference>
<dbReference type="NCBIfam" id="NF003281">
    <property type="entry name" value="PRK04280.1"/>
    <property type="match status" value="1"/>
</dbReference>
<dbReference type="PANTHER" id="PTHR34471">
    <property type="entry name" value="ARGININE REPRESSOR"/>
    <property type="match status" value="1"/>
</dbReference>
<dbReference type="PANTHER" id="PTHR34471:SF1">
    <property type="entry name" value="ARGININE REPRESSOR"/>
    <property type="match status" value="1"/>
</dbReference>
<dbReference type="Pfam" id="PF01316">
    <property type="entry name" value="Arg_repressor"/>
    <property type="match status" value="1"/>
</dbReference>
<dbReference type="Pfam" id="PF02863">
    <property type="entry name" value="Arg_repressor_C"/>
    <property type="match status" value="1"/>
</dbReference>
<dbReference type="PRINTS" id="PR01467">
    <property type="entry name" value="ARGREPRESSOR"/>
</dbReference>
<dbReference type="SUPFAM" id="SSF55252">
    <property type="entry name" value="C-terminal domain of arginine repressor"/>
    <property type="match status" value="1"/>
</dbReference>
<dbReference type="SUPFAM" id="SSF46785">
    <property type="entry name" value="Winged helix' DNA-binding domain"/>
    <property type="match status" value="1"/>
</dbReference>
<keyword id="KW-0002">3D-structure</keyword>
<keyword id="KW-0028">Amino-acid biosynthesis</keyword>
<keyword id="KW-0055">Arginine biosynthesis</keyword>
<keyword id="KW-0963">Cytoplasm</keyword>
<keyword id="KW-0238">DNA-binding</keyword>
<keyword id="KW-0678">Repressor</keyword>
<keyword id="KW-0804">Transcription</keyword>
<keyword id="KW-0805">Transcription regulation</keyword>
<sequence>MNKGQRHIKIREIIMSNDIETQDELVDRLREAGFNVTQATVSRDIKEMQLVKVPMANGRYKYSLPSDQRFNPLQKLKRALVDVFIKLDGTGNLLVLRTLPGNAHAIGVLLDNLDWDEIVGTICGDDTCLIICRTPKDAKKVSNQLLSML</sequence>
<name>ARGR_GEOSE</name>